<accession>B7MXT7</accession>
<feature type="chain" id="PRO_0000383512" description="Probable 4-deoxy-4-formamido-L-arabinose-phosphoundecaprenol deformylase ArnD">
    <location>
        <begin position="1"/>
        <end position="296"/>
    </location>
</feature>
<feature type="domain" description="NodB homology" evidence="1">
    <location>
        <begin position="2"/>
        <end position="260"/>
    </location>
</feature>
<gene>
    <name evidence="1" type="primary">arnD</name>
    <name type="ordered locus">ECED1_2722</name>
</gene>
<protein>
    <recommendedName>
        <fullName evidence="1">Probable 4-deoxy-4-formamido-L-arabinose-phosphoundecaprenol deformylase ArnD</fullName>
        <ecNumber evidence="1">3.5.1.n3</ecNumber>
    </recommendedName>
</protein>
<comment type="function">
    <text evidence="1">Catalyzes the deformylation of 4-deoxy-4-formamido-L-arabinose-phosphoundecaprenol to 4-amino-4-deoxy-L-arabinose-phosphoundecaprenol. The modified arabinose is attached to lipid A and is required for resistance to polymyxin and cationic antimicrobial peptides.</text>
</comment>
<comment type="catalytic activity">
    <reaction evidence="1">
        <text>4-deoxy-4-formamido-alpha-L-arabinopyranosyl di-trans,octa-cis-undecaprenyl phosphate + H2O = 4-amino-4-deoxy-alpha-L-arabinopyranosyl di-trans,octa-cis-undecaprenyl phosphate + formate</text>
        <dbReference type="Rhea" id="RHEA:27734"/>
        <dbReference type="ChEBI" id="CHEBI:15377"/>
        <dbReference type="ChEBI" id="CHEBI:15740"/>
        <dbReference type="ChEBI" id="CHEBI:58909"/>
        <dbReference type="ChEBI" id="CHEBI:60463"/>
        <dbReference type="EC" id="3.5.1.n3"/>
    </reaction>
</comment>
<comment type="pathway">
    <text evidence="1">Glycolipid biosynthesis; 4-amino-4-deoxy-alpha-L-arabinose undecaprenyl phosphate biosynthesis; 4-amino-4-deoxy-alpha-L-arabinose undecaprenyl phosphate from UDP-4-deoxy-4-formamido-beta-L-arabinose and undecaprenyl phosphate: step 2/2.</text>
</comment>
<comment type="pathway">
    <text evidence="1">Bacterial outer membrane biogenesis; lipopolysaccharide biosynthesis.</text>
</comment>
<comment type="similarity">
    <text evidence="1">Belongs to the polysaccharide deacetylase family. ArnD deformylase subfamily.</text>
</comment>
<keyword id="KW-0046">Antibiotic resistance</keyword>
<keyword id="KW-0378">Hydrolase</keyword>
<keyword id="KW-0441">Lipid A biosynthesis</keyword>
<keyword id="KW-0444">Lipid biosynthesis</keyword>
<keyword id="KW-0443">Lipid metabolism</keyword>
<keyword id="KW-0448">Lipopolysaccharide biosynthesis</keyword>
<dbReference type="EC" id="3.5.1.n3" evidence="1"/>
<dbReference type="EMBL" id="CU928162">
    <property type="protein sequence ID" value="CAR08903.2"/>
    <property type="molecule type" value="Genomic_DNA"/>
</dbReference>
<dbReference type="RefSeq" id="WP_000169713.1">
    <property type="nucleotide sequence ID" value="NC_011745.1"/>
</dbReference>
<dbReference type="SMR" id="B7MXT7"/>
<dbReference type="KEGG" id="ecq:ECED1_2722"/>
<dbReference type="HOGENOM" id="CLU_084199_0_0_6"/>
<dbReference type="UniPathway" id="UPA00030"/>
<dbReference type="UniPathway" id="UPA00036">
    <property type="reaction ID" value="UER00496"/>
</dbReference>
<dbReference type="Proteomes" id="UP000000748">
    <property type="component" value="Chromosome"/>
</dbReference>
<dbReference type="GO" id="GO:0016020">
    <property type="term" value="C:membrane"/>
    <property type="evidence" value="ECO:0007669"/>
    <property type="project" value="GOC"/>
</dbReference>
<dbReference type="GO" id="GO:0016811">
    <property type="term" value="F:hydrolase activity, acting on carbon-nitrogen (but not peptide) bonds, in linear amides"/>
    <property type="evidence" value="ECO:0007669"/>
    <property type="project" value="UniProtKB-UniRule"/>
</dbReference>
<dbReference type="GO" id="GO:0036108">
    <property type="term" value="P:4-amino-4-deoxy-alpha-L-arabinopyranosyl undecaprenyl phosphate biosynthetic process"/>
    <property type="evidence" value="ECO:0007669"/>
    <property type="project" value="UniProtKB-UniRule"/>
</dbReference>
<dbReference type="GO" id="GO:0009245">
    <property type="term" value="P:lipid A biosynthetic process"/>
    <property type="evidence" value="ECO:0007669"/>
    <property type="project" value="UniProtKB-UniRule"/>
</dbReference>
<dbReference type="GO" id="GO:0009103">
    <property type="term" value="P:lipopolysaccharide biosynthetic process"/>
    <property type="evidence" value="ECO:0007669"/>
    <property type="project" value="UniProtKB-UniRule"/>
</dbReference>
<dbReference type="GO" id="GO:0046677">
    <property type="term" value="P:response to antibiotic"/>
    <property type="evidence" value="ECO:0007669"/>
    <property type="project" value="UniProtKB-KW"/>
</dbReference>
<dbReference type="CDD" id="cd10939">
    <property type="entry name" value="CE4_ArnD"/>
    <property type="match status" value="1"/>
</dbReference>
<dbReference type="Gene3D" id="3.20.20.370">
    <property type="entry name" value="Glycoside hydrolase/deacetylase"/>
    <property type="match status" value="1"/>
</dbReference>
<dbReference type="HAMAP" id="MF_01870">
    <property type="entry name" value="ArnD"/>
    <property type="match status" value="1"/>
</dbReference>
<dbReference type="InterPro" id="IPR023557">
    <property type="entry name" value="ArnD"/>
</dbReference>
<dbReference type="InterPro" id="IPR011330">
    <property type="entry name" value="Glyco_hydro/deAcase_b/a-brl"/>
</dbReference>
<dbReference type="InterPro" id="IPR002509">
    <property type="entry name" value="NODB_dom"/>
</dbReference>
<dbReference type="InterPro" id="IPR050248">
    <property type="entry name" value="Polysacc_deacetylase_ArnD"/>
</dbReference>
<dbReference type="NCBIfam" id="NF011923">
    <property type="entry name" value="PRK15394.1"/>
    <property type="match status" value="1"/>
</dbReference>
<dbReference type="PANTHER" id="PTHR10587:SF137">
    <property type="entry name" value="4-DEOXY-4-FORMAMIDO-L-ARABINOSE-PHOSPHOUNDECAPRENOL DEFORMYLASE ARND-RELATED"/>
    <property type="match status" value="1"/>
</dbReference>
<dbReference type="PANTHER" id="PTHR10587">
    <property type="entry name" value="GLYCOSYL TRANSFERASE-RELATED"/>
    <property type="match status" value="1"/>
</dbReference>
<dbReference type="Pfam" id="PF01522">
    <property type="entry name" value="Polysacc_deac_1"/>
    <property type="match status" value="1"/>
</dbReference>
<dbReference type="SUPFAM" id="SSF88713">
    <property type="entry name" value="Glycoside hydrolase/deacetylase"/>
    <property type="match status" value="1"/>
</dbReference>
<dbReference type="PROSITE" id="PS51677">
    <property type="entry name" value="NODB"/>
    <property type="match status" value="1"/>
</dbReference>
<evidence type="ECO:0000255" key="1">
    <source>
        <dbReference type="HAMAP-Rule" id="MF_01870"/>
    </source>
</evidence>
<organism>
    <name type="scientific">Escherichia coli O81 (strain ED1a)</name>
    <dbReference type="NCBI Taxonomy" id="585397"/>
    <lineage>
        <taxon>Bacteria</taxon>
        <taxon>Pseudomonadati</taxon>
        <taxon>Pseudomonadota</taxon>
        <taxon>Gammaproteobacteria</taxon>
        <taxon>Enterobacterales</taxon>
        <taxon>Enterobacteriaceae</taxon>
        <taxon>Escherichia</taxon>
    </lineage>
</organism>
<sequence length="296" mass="33022">MTKVGLRIDVDTFRGTREGVPRLLEILSKHNIQASIFFSVGPDNMGRHLWRLVKPQFLWKMLRSNAASLYGWDILLAGTAWPGKEIGHANADIIREAAKHHEVGLHAWDHHAWQAHSGNWDRQTMIDDIARGLRTLEEIIGQPVTCSAAAGWRADQQVIEAKEAFHLRYNSDCRGAMPFRPLLESGTPGTAQIPVTLPTWDEVIGRDVKAEDFNGWLLNRIQRDKGTPVYTIHAEVEGCAYQHNFVDLLKRAAQEGVTFCPLSELLSGTLPLGQVVRGNIAGREGWLGCQQMAGSH</sequence>
<name>ARND_ECO81</name>
<proteinExistence type="inferred from homology"/>
<reference key="1">
    <citation type="journal article" date="2009" name="PLoS Genet.">
        <title>Organised genome dynamics in the Escherichia coli species results in highly diverse adaptive paths.</title>
        <authorList>
            <person name="Touchon M."/>
            <person name="Hoede C."/>
            <person name="Tenaillon O."/>
            <person name="Barbe V."/>
            <person name="Baeriswyl S."/>
            <person name="Bidet P."/>
            <person name="Bingen E."/>
            <person name="Bonacorsi S."/>
            <person name="Bouchier C."/>
            <person name="Bouvet O."/>
            <person name="Calteau A."/>
            <person name="Chiapello H."/>
            <person name="Clermont O."/>
            <person name="Cruveiller S."/>
            <person name="Danchin A."/>
            <person name="Diard M."/>
            <person name="Dossat C."/>
            <person name="Karoui M.E."/>
            <person name="Frapy E."/>
            <person name="Garry L."/>
            <person name="Ghigo J.M."/>
            <person name="Gilles A.M."/>
            <person name="Johnson J."/>
            <person name="Le Bouguenec C."/>
            <person name="Lescat M."/>
            <person name="Mangenot S."/>
            <person name="Martinez-Jehanne V."/>
            <person name="Matic I."/>
            <person name="Nassif X."/>
            <person name="Oztas S."/>
            <person name="Petit M.A."/>
            <person name="Pichon C."/>
            <person name="Rouy Z."/>
            <person name="Ruf C.S."/>
            <person name="Schneider D."/>
            <person name="Tourret J."/>
            <person name="Vacherie B."/>
            <person name="Vallenet D."/>
            <person name="Medigue C."/>
            <person name="Rocha E.P.C."/>
            <person name="Denamur E."/>
        </authorList>
    </citation>
    <scope>NUCLEOTIDE SEQUENCE [LARGE SCALE GENOMIC DNA]</scope>
    <source>
        <strain>ED1a</strain>
    </source>
</reference>